<reference key="1">
    <citation type="journal article" date="2009" name="PLoS Genet.">
        <title>Organised genome dynamics in the Escherichia coli species results in highly diverse adaptive paths.</title>
        <authorList>
            <person name="Touchon M."/>
            <person name="Hoede C."/>
            <person name="Tenaillon O."/>
            <person name="Barbe V."/>
            <person name="Baeriswyl S."/>
            <person name="Bidet P."/>
            <person name="Bingen E."/>
            <person name="Bonacorsi S."/>
            <person name="Bouchier C."/>
            <person name="Bouvet O."/>
            <person name="Calteau A."/>
            <person name="Chiapello H."/>
            <person name="Clermont O."/>
            <person name="Cruveiller S."/>
            <person name="Danchin A."/>
            <person name="Diard M."/>
            <person name="Dossat C."/>
            <person name="Karoui M.E."/>
            <person name="Frapy E."/>
            <person name="Garry L."/>
            <person name="Ghigo J.M."/>
            <person name="Gilles A.M."/>
            <person name="Johnson J."/>
            <person name="Le Bouguenec C."/>
            <person name="Lescat M."/>
            <person name="Mangenot S."/>
            <person name="Martinez-Jehanne V."/>
            <person name="Matic I."/>
            <person name="Nassif X."/>
            <person name="Oztas S."/>
            <person name="Petit M.A."/>
            <person name="Pichon C."/>
            <person name="Rouy Z."/>
            <person name="Ruf C.S."/>
            <person name="Schneider D."/>
            <person name="Tourret J."/>
            <person name="Vacherie B."/>
            <person name="Vallenet D."/>
            <person name="Medigue C."/>
            <person name="Rocha E.P.C."/>
            <person name="Denamur E."/>
        </authorList>
    </citation>
    <scope>NUCLEOTIDE SEQUENCE [LARGE SCALE GENOMIC DNA]</scope>
    <source>
        <strain>UMN026 / ExPEC</strain>
    </source>
</reference>
<organism>
    <name type="scientific">Escherichia coli O17:K52:H18 (strain UMN026 / ExPEC)</name>
    <dbReference type="NCBI Taxonomy" id="585056"/>
    <lineage>
        <taxon>Bacteria</taxon>
        <taxon>Pseudomonadati</taxon>
        <taxon>Pseudomonadota</taxon>
        <taxon>Gammaproteobacteria</taxon>
        <taxon>Enterobacterales</taxon>
        <taxon>Enterobacteriaceae</taxon>
        <taxon>Escherichia</taxon>
    </lineage>
</organism>
<keyword id="KW-0004">4Fe-4S</keyword>
<keyword id="KW-0408">Iron</keyword>
<keyword id="KW-0411">Iron-sulfur</keyword>
<keyword id="KW-0479">Metal-binding</keyword>
<proteinExistence type="inferred from homology"/>
<sequence length="191" mass="20998">MIRISDAAQAHFAKLLANQEEGTQIRVFVINPGTPNAECGVSYCPPDAVEATDTALKFDLLTAYVDELSAPYLEDAEIDFVTDQLGSQLTLKAPNAKMRKVADDAPLMERVEYMLQSQINPQLAGHGGRVSLMEITEDGYAILQFGGGCNGCSMVDVTLKEGIEKQLLNEFPELKGVRDLTEHQRGEHSYY</sequence>
<dbReference type="EMBL" id="CU928163">
    <property type="protein sequence ID" value="CAR15019.1"/>
    <property type="molecule type" value="Genomic_DNA"/>
</dbReference>
<dbReference type="RefSeq" id="WP_000619389.1">
    <property type="nucleotide sequence ID" value="NC_011751.1"/>
</dbReference>
<dbReference type="RefSeq" id="YP_002414524.1">
    <property type="nucleotide sequence ID" value="NC_011751.1"/>
</dbReference>
<dbReference type="SMR" id="B7NE19"/>
<dbReference type="STRING" id="585056.ECUMN_3873"/>
<dbReference type="GeneID" id="93778582"/>
<dbReference type="KEGG" id="eum:ECUMN_3873"/>
<dbReference type="PATRIC" id="fig|585056.7.peg.4047"/>
<dbReference type="HOGENOM" id="CLU_094569_0_0_6"/>
<dbReference type="Proteomes" id="UP000007097">
    <property type="component" value="Chromosome"/>
</dbReference>
<dbReference type="GO" id="GO:0051539">
    <property type="term" value="F:4 iron, 4 sulfur cluster binding"/>
    <property type="evidence" value="ECO:0007669"/>
    <property type="project" value="UniProtKB-UniRule"/>
</dbReference>
<dbReference type="GO" id="GO:0005506">
    <property type="term" value="F:iron ion binding"/>
    <property type="evidence" value="ECO:0007669"/>
    <property type="project" value="InterPro"/>
</dbReference>
<dbReference type="GO" id="GO:0016226">
    <property type="term" value="P:iron-sulfur cluster assembly"/>
    <property type="evidence" value="ECO:0007669"/>
    <property type="project" value="UniProtKB-UniRule"/>
</dbReference>
<dbReference type="GO" id="GO:0051604">
    <property type="term" value="P:protein maturation"/>
    <property type="evidence" value="ECO:0007669"/>
    <property type="project" value="UniProtKB-UniRule"/>
</dbReference>
<dbReference type="FunFam" id="2.60.300.12:FF:000004">
    <property type="entry name" value="Fe/S biogenesis protein NfuA"/>
    <property type="match status" value="1"/>
</dbReference>
<dbReference type="FunFam" id="3.30.300.130:FF:000002">
    <property type="entry name" value="Fe/S biogenesis protein NfuA"/>
    <property type="match status" value="1"/>
</dbReference>
<dbReference type="Gene3D" id="3.30.300.130">
    <property type="entry name" value="Fe-S cluster assembly (FSCA)"/>
    <property type="match status" value="1"/>
</dbReference>
<dbReference type="Gene3D" id="2.60.300.12">
    <property type="entry name" value="HesB-like domain"/>
    <property type="match status" value="1"/>
</dbReference>
<dbReference type="HAMAP" id="MF_01637">
    <property type="entry name" value="Fe_S_biogen_NfuA"/>
    <property type="match status" value="1"/>
</dbReference>
<dbReference type="InterPro" id="IPR017726">
    <property type="entry name" value="Fe/S_biogenesis_protein_NfuA"/>
</dbReference>
<dbReference type="InterPro" id="IPR000361">
    <property type="entry name" value="FeS_biogenesis"/>
</dbReference>
<dbReference type="InterPro" id="IPR034904">
    <property type="entry name" value="FSCA_dom_sf"/>
</dbReference>
<dbReference type="InterPro" id="IPR035903">
    <property type="entry name" value="HesB-like_dom_sf"/>
</dbReference>
<dbReference type="InterPro" id="IPR001075">
    <property type="entry name" value="NIF_FeS_clus_asmbl_NifU_C"/>
</dbReference>
<dbReference type="NCBIfam" id="NF008392">
    <property type="entry name" value="PRK11190.1"/>
    <property type="match status" value="1"/>
</dbReference>
<dbReference type="NCBIfam" id="TIGR03341">
    <property type="entry name" value="YhgI_GntY"/>
    <property type="match status" value="1"/>
</dbReference>
<dbReference type="PANTHER" id="PTHR11178:SF51">
    <property type="entry name" value="FE_S BIOGENESIS PROTEIN NFUA"/>
    <property type="match status" value="1"/>
</dbReference>
<dbReference type="PANTHER" id="PTHR11178">
    <property type="entry name" value="IRON-SULFUR CLUSTER SCAFFOLD PROTEIN NFU-RELATED"/>
    <property type="match status" value="1"/>
</dbReference>
<dbReference type="Pfam" id="PF01521">
    <property type="entry name" value="Fe-S_biosyn"/>
    <property type="match status" value="1"/>
</dbReference>
<dbReference type="Pfam" id="PF01106">
    <property type="entry name" value="NifU"/>
    <property type="match status" value="1"/>
</dbReference>
<dbReference type="SUPFAM" id="SSF117916">
    <property type="entry name" value="Fe-S cluster assembly (FSCA) domain-like"/>
    <property type="match status" value="1"/>
</dbReference>
<dbReference type="SUPFAM" id="SSF89360">
    <property type="entry name" value="HesB-like domain"/>
    <property type="match status" value="1"/>
</dbReference>
<evidence type="ECO:0000255" key="1">
    <source>
        <dbReference type="HAMAP-Rule" id="MF_01637"/>
    </source>
</evidence>
<accession>B7NE19</accession>
<protein>
    <recommendedName>
        <fullName evidence="1">Fe/S biogenesis protein NfuA</fullName>
    </recommendedName>
</protein>
<name>NFUA_ECOLU</name>
<gene>
    <name evidence="1" type="primary">nfuA</name>
    <name type="ordered locus">ECUMN_3873</name>
</gene>
<comment type="function">
    <text evidence="1">Involved in iron-sulfur cluster biogenesis. Binds a 4Fe-4S cluster, can transfer this cluster to apoproteins, and thereby intervenes in the maturation of Fe/S proteins. Could also act as a scaffold/chaperone for damaged Fe/S proteins.</text>
</comment>
<comment type="cofactor">
    <cofactor evidence="1">
        <name>[4Fe-4S] cluster</name>
        <dbReference type="ChEBI" id="CHEBI:49883"/>
    </cofactor>
    <text evidence="1">Binds 1 [4Fe-4S] cluster per subunit. The cluster is presumably bound at the interface of two monomers.</text>
</comment>
<comment type="subunit">
    <text evidence="1">Homodimer.</text>
</comment>
<comment type="similarity">
    <text evidence="1">Belongs to the NfuA family.</text>
</comment>
<feature type="chain" id="PRO_1000186750" description="Fe/S biogenesis protein NfuA">
    <location>
        <begin position="1"/>
        <end position="191"/>
    </location>
</feature>
<feature type="binding site" evidence="1">
    <location>
        <position position="149"/>
    </location>
    <ligand>
        <name>[4Fe-4S] cluster</name>
        <dbReference type="ChEBI" id="CHEBI:49883"/>
    </ligand>
</feature>
<feature type="binding site" evidence="1">
    <location>
        <position position="152"/>
    </location>
    <ligand>
        <name>[4Fe-4S] cluster</name>
        <dbReference type="ChEBI" id="CHEBI:49883"/>
    </ligand>
</feature>